<comment type="function">
    <text evidence="1">Catalyzes the conversion of urocanate to 4-imidazolone-5-propionate.</text>
</comment>
<comment type="catalytic activity">
    <reaction evidence="1">
        <text>4-imidazolone-5-propanoate = trans-urocanate + H2O</text>
        <dbReference type="Rhea" id="RHEA:13101"/>
        <dbReference type="ChEBI" id="CHEBI:15377"/>
        <dbReference type="ChEBI" id="CHEBI:17771"/>
        <dbReference type="ChEBI" id="CHEBI:77893"/>
        <dbReference type="EC" id="4.2.1.49"/>
    </reaction>
</comment>
<comment type="cofactor">
    <cofactor evidence="1">
        <name>NAD(+)</name>
        <dbReference type="ChEBI" id="CHEBI:57540"/>
    </cofactor>
    <text evidence="1">Binds 1 NAD(+) per subunit.</text>
</comment>
<comment type="pathway">
    <text evidence="1">Amino-acid degradation; L-histidine degradation into L-glutamate; N-formimidoyl-L-glutamate from L-histidine: step 2/3.</text>
</comment>
<comment type="subcellular location">
    <subcellularLocation>
        <location evidence="1">Cytoplasm</location>
    </subcellularLocation>
</comment>
<comment type="similarity">
    <text evidence="1">Belongs to the urocanase family.</text>
</comment>
<feature type="chain" id="PRO_1000129561" description="Urocanate hydratase">
    <location>
        <begin position="1"/>
        <end position="552"/>
    </location>
</feature>
<feature type="active site" evidence="1">
    <location>
        <position position="407"/>
    </location>
</feature>
<feature type="binding site" evidence="1">
    <location>
        <begin position="49"/>
        <end position="50"/>
    </location>
    <ligand>
        <name>NAD(+)</name>
        <dbReference type="ChEBI" id="CHEBI:57540"/>
    </ligand>
</feature>
<feature type="binding site" evidence="1">
    <location>
        <position position="127"/>
    </location>
    <ligand>
        <name>NAD(+)</name>
        <dbReference type="ChEBI" id="CHEBI:57540"/>
    </ligand>
</feature>
<feature type="binding site" evidence="1">
    <location>
        <begin position="173"/>
        <end position="175"/>
    </location>
    <ligand>
        <name>NAD(+)</name>
        <dbReference type="ChEBI" id="CHEBI:57540"/>
    </ligand>
</feature>
<feature type="binding site" evidence="1">
    <location>
        <position position="193"/>
    </location>
    <ligand>
        <name>NAD(+)</name>
        <dbReference type="ChEBI" id="CHEBI:57540"/>
    </ligand>
</feature>
<feature type="binding site" evidence="1">
    <location>
        <begin position="239"/>
        <end position="240"/>
    </location>
    <ligand>
        <name>NAD(+)</name>
        <dbReference type="ChEBI" id="CHEBI:57540"/>
    </ligand>
</feature>
<feature type="binding site" evidence="1">
    <location>
        <begin position="260"/>
        <end position="264"/>
    </location>
    <ligand>
        <name>NAD(+)</name>
        <dbReference type="ChEBI" id="CHEBI:57540"/>
    </ligand>
</feature>
<feature type="binding site" evidence="1">
    <location>
        <begin position="270"/>
        <end position="271"/>
    </location>
    <ligand>
        <name>NAD(+)</name>
        <dbReference type="ChEBI" id="CHEBI:57540"/>
    </ligand>
</feature>
<feature type="binding site" evidence="1">
    <location>
        <position position="319"/>
    </location>
    <ligand>
        <name>NAD(+)</name>
        <dbReference type="ChEBI" id="CHEBI:57540"/>
    </ligand>
</feature>
<feature type="binding site" evidence="1">
    <location>
        <position position="489"/>
    </location>
    <ligand>
        <name>NAD(+)</name>
        <dbReference type="ChEBI" id="CHEBI:57540"/>
    </ligand>
</feature>
<sequence length="552" mass="60853">MEKVQQTIRAARGTELQTKGWVQEAALRMLMNNLDPEVAEKPEELVVYGGIGRAARNWESYHAIVDSLKTLENDETLLVQSGKPVAIFKSHEDAPRVLLANSNLVPKWANWDHFRELEKKGLMMYGQMTAGSWIYIGTQGILQGTYETFGEAARQHFDGSLKGTVTITAGLGGMGGAQPLAVTMNGGVVIAIDVDKRSIDRRIEKRYCDKYTESLEEALAIANEYKEKKEPISIGLLGNAAEILPELVNRNIIPDLVTDQTSAHDPLNGYIPVGYTVEEAAKLREEDPERYVQLSKESMKKHVEAMLAMQEKGAITFDYGNNIRQVAFDEGLKNAFDFPGFVPAFIRPLFCEGKGPFRWVALSGDPEDIYKTDEVILREFADNEHLCNWIRMARQQVEFQGLPSRICWLGYGERAKFGRIINEMVANGELSAPIVIGRDHLDCGSVASPNRETESMKDGSDAVADWPILNALINSVNGASWVSVHHGGGVGMGYSLHAGMVIVADGTEAAAKRIERVLTSDPGMGVVRHVDAGYDLAVQTAKEKGVNIPMMK</sequence>
<gene>
    <name evidence="1" type="primary">hutU</name>
    <name type="ordered locus">BcerKBAB4_3338</name>
</gene>
<proteinExistence type="inferred from homology"/>
<reference key="1">
    <citation type="journal article" date="2008" name="Chem. Biol. Interact.">
        <title>Extending the Bacillus cereus group genomics to putative food-borne pathogens of different toxicity.</title>
        <authorList>
            <person name="Lapidus A."/>
            <person name="Goltsman E."/>
            <person name="Auger S."/>
            <person name="Galleron N."/>
            <person name="Segurens B."/>
            <person name="Dossat C."/>
            <person name="Land M.L."/>
            <person name="Broussolle V."/>
            <person name="Brillard J."/>
            <person name="Guinebretiere M.-H."/>
            <person name="Sanchis V."/>
            <person name="Nguen-the C."/>
            <person name="Lereclus D."/>
            <person name="Richardson P."/>
            <person name="Wincker P."/>
            <person name="Weissenbach J."/>
            <person name="Ehrlich S.D."/>
            <person name="Sorokin A."/>
        </authorList>
    </citation>
    <scope>NUCLEOTIDE SEQUENCE [LARGE SCALE GENOMIC DNA]</scope>
    <source>
        <strain>KBAB4</strain>
    </source>
</reference>
<evidence type="ECO:0000255" key="1">
    <source>
        <dbReference type="HAMAP-Rule" id="MF_00577"/>
    </source>
</evidence>
<accession>A9VPT7</accession>
<name>HUTU_BACMK</name>
<protein>
    <recommendedName>
        <fullName evidence="1">Urocanate hydratase</fullName>
        <shortName evidence="1">Urocanase</shortName>
        <ecNumber evidence="1">4.2.1.49</ecNumber>
    </recommendedName>
    <alternativeName>
        <fullName evidence="1">Imidazolonepropionate hydrolase</fullName>
    </alternativeName>
</protein>
<keyword id="KW-0963">Cytoplasm</keyword>
<keyword id="KW-0369">Histidine metabolism</keyword>
<keyword id="KW-0456">Lyase</keyword>
<keyword id="KW-0520">NAD</keyword>
<organism>
    <name type="scientific">Bacillus mycoides (strain KBAB4)</name>
    <name type="common">Bacillus weihenstephanensis</name>
    <dbReference type="NCBI Taxonomy" id="315730"/>
    <lineage>
        <taxon>Bacteria</taxon>
        <taxon>Bacillati</taxon>
        <taxon>Bacillota</taxon>
        <taxon>Bacilli</taxon>
        <taxon>Bacillales</taxon>
        <taxon>Bacillaceae</taxon>
        <taxon>Bacillus</taxon>
        <taxon>Bacillus cereus group</taxon>
    </lineage>
</organism>
<dbReference type="EC" id="4.2.1.49" evidence="1"/>
<dbReference type="EMBL" id="CP000903">
    <property type="protein sequence ID" value="ABY44513.1"/>
    <property type="molecule type" value="Genomic_DNA"/>
</dbReference>
<dbReference type="RefSeq" id="WP_002033512.1">
    <property type="nucleotide sequence ID" value="NC_010184.1"/>
</dbReference>
<dbReference type="SMR" id="A9VPT7"/>
<dbReference type="GeneID" id="66266829"/>
<dbReference type="KEGG" id="bwe:BcerKBAB4_3338"/>
<dbReference type="eggNOG" id="COG2987">
    <property type="taxonomic scope" value="Bacteria"/>
</dbReference>
<dbReference type="HOGENOM" id="CLU_018868_0_1_9"/>
<dbReference type="UniPathway" id="UPA00379">
    <property type="reaction ID" value="UER00550"/>
</dbReference>
<dbReference type="Proteomes" id="UP000002154">
    <property type="component" value="Chromosome"/>
</dbReference>
<dbReference type="GO" id="GO:0005737">
    <property type="term" value="C:cytoplasm"/>
    <property type="evidence" value="ECO:0007669"/>
    <property type="project" value="UniProtKB-SubCell"/>
</dbReference>
<dbReference type="GO" id="GO:0016153">
    <property type="term" value="F:urocanate hydratase activity"/>
    <property type="evidence" value="ECO:0007669"/>
    <property type="project" value="UniProtKB-UniRule"/>
</dbReference>
<dbReference type="GO" id="GO:0019556">
    <property type="term" value="P:L-histidine catabolic process to glutamate and formamide"/>
    <property type="evidence" value="ECO:0007669"/>
    <property type="project" value="UniProtKB-UniPathway"/>
</dbReference>
<dbReference type="GO" id="GO:0019557">
    <property type="term" value="P:L-histidine catabolic process to glutamate and formate"/>
    <property type="evidence" value="ECO:0007669"/>
    <property type="project" value="UniProtKB-UniPathway"/>
</dbReference>
<dbReference type="FunFam" id="3.40.50.10730:FF:000001">
    <property type="entry name" value="Urocanate hydratase"/>
    <property type="match status" value="1"/>
</dbReference>
<dbReference type="Gene3D" id="3.40.50.10730">
    <property type="entry name" value="Urocanase like domains"/>
    <property type="match status" value="1"/>
</dbReference>
<dbReference type="Gene3D" id="3.40.1770.10">
    <property type="entry name" value="Urocanase superfamily"/>
    <property type="match status" value="1"/>
</dbReference>
<dbReference type="HAMAP" id="MF_00577">
    <property type="entry name" value="HutU"/>
    <property type="match status" value="1"/>
</dbReference>
<dbReference type="InterPro" id="IPR055351">
    <property type="entry name" value="Urocanase"/>
</dbReference>
<dbReference type="InterPro" id="IPR023637">
    <property type="entry name" value="Urocanase-like"/>
</dbReference>
<dbReference type="InterPro" id="IPR035401">
    <property type="entry name" value="Urocanase_C"/>
</dbReference>
<dbReference type="InterPro" id="IPR038364">
    <property type="entry name" value="Urocanase_central_sf"/>
</dbReference>
<dbReference type="InterPro" id="IPR023636">
    <property type="entry name" value="Urocanase_CS"/>
</dbReference>
<dbReference type="InterPro" id="IPR035400">
    <property type="entry name" value="Urocanase_N"/>
</dbReference>
<dbReference type="InterPro" id="IPR035085">
    <property type="entry name" value="Urocanase_Rossmann-like"/>
</dbReference>
<dbReference type="InterPro" id="IPR036190">
    <property type="entry name" value="Urocanase_sf"/>
</dbReference>
<dbReference type="NCBIfam" id="TIGR01228">
    <property type="entry name" value="hutU"/>
    <property type="match status" value="1"/>
</dbReference>
<dbReference type="NCBIfam" id="NF003820">
    <property type="entry name" value="PRK05414.1"/>
    <property type="match status" value="1"/>
</dbReference>
<dbReference type="PANTHER" id="PTHR12216">
    <property type="entry name" value="UROCANATE HYDRATASE"/>
    <property type="match status" value="1"/>
</dbReference>
<dbReference type="PANTHER" id="PTHR12216:SF4">
    <property type="entry name" value="UROCANATE HYDRATASE"/>
    <property type="match status" value="1"/>
</dbReference>
<dbReference type="Pfam" id="PF01175">
    <property type="entry name" value="Urocanase"/>
    <property type="match status" value="1"/>
</dbReference>
<dbReference type="Pfam" id="PF17392">
    <property type="entry name" value="Urocanase_C"/>
    <property type="match status" value="1"/>
</dbReference>
<dbReference type="Pfam" id="PF17391">
    <property type="entry name" value="Urocanase_N"/>
    <property type="match status" value="1"/>
</dbReference>
<dbReference type="PIRSF" id="PIRSF001423">
    <property type="entry name" value="Urocanate_hydrat"/>
    <property type="match status" value="1"/>
</dbReference>
<dbReference type="SUPFAM" id="SSF111326">
    <property type="entry name" value="Urocanase"/>
    <property type="match status" value="1"/>
</dbReference>
<dbReference type="PROSITE" id="PS01233">
    <property type="entry name" value="UROCANASE"/>
    <property type="match status" value="1"/>
</dbReference>